<comment type="function">
    <text evidence="1">Required for polyglutamylation of axonemal tubulin. Plays a role in anterograde intraflagellar transport (IFT), the process by which cilia precursors are transported from the base of the cilium to the site of their incorporation at the tip. This protein is specifically required for the kinesin osm-3 to dock onto and move the IFT particles which contain these precursors.</text>
</comment>
<comment type="subcellular location">
    <subcellularLocation>
        <location evidence="1">Cell projection</location>
        <location evidence="1">Cilium</location>
    </subcellularLocation>
</comment>
<comment type="similarity">
    <text evidence="2">Belongs to the TTC30/dfy-1/fleer family.</text>
</comment>
<comment type="sequence caution" evidence="2">
    <conflict type="erroneous gene model prediction">
        <sequence resource="EMBL-CDS" id="CAP30085"/>
    </conflict>
</comment>
<sequence length="657" mass="75715">MNAMLNIKEGEFTSTIYTLIHEHKFNDAIRILQYQHERNPKNLAALSLLGYCYYYTQDFQNAADCYSQLSYNYPHHSQYKLYHAQALYHAFKPAEALNVVTTIQDDDLLNESIKLEAAIKYQEDDLVNCRILVDQLPTDDATVLINTACIDYKEGNYSEALQKFNQATEFSGYQSGLAYSIALCYYRRGDYNSSLQLISEIINRGIKDHPEFHIGMVTEGFDVNVVQNSMTLHESALIEAFNLRFAIYYKTKDFKAAKECLTDMPPRHEHDYDPVTLHNLAINTANTDFGDSSAKLQFLLGSNPFPQETFANLLFLYCKNDYFGLAADVLAENPHQSFYCLNEYQFNLLEALIYMPTSPEESLKKLEKLDKECMTRLRKIAVEIQIKKEQKTSDKDDSLEMRNLIESYEDELELYLPVLMTHAKYYWDKRDYLAVEKLFRASNEYCNEHHTWKLNVAHTIFMQEKKYKEAALFYEPIVNRKYDGGILEIPAMVLANLVVCYIMTNQTDEAESILKTVENAEENALMSNPNEKYFHNSIISLVIGSLYCSKGNFEFGMSRVVKALEPPEKKLGVDTWYYAKRCIVAAIEMMAKNILVMRDSVVMEVIQFLSSCEIPGRNIYTVPDDLFEQAAESKVKCNVTYEARMLKAALLTVFHGS</sequence>
<accession>A8XBR9</accession>
<gene>
    <name type="primary">dyf-1</name>
    <name type="ORF">CBG10774</name>
</gene>
<evidence type="ECO:0000250" key="1"/>
<evidence type="ECO:0000305" key="2"/>
<name>TTC30_CAEBR</name>
<feature type="chain" id="PRO_0000333209" description="Tetratricopeptide repeat protein 30 homolog">
    <location>
        <begin position="1"/>
        <end position="657"/>
    </location>
</feature>
<feature type="repeat" description="TPR 1">
    <location>
        <begin position="9"/>
        <end position="42"/>
    </location>
</feature>
<feature type="repeat" description="TPR 2">
    <location>
        <begin position="43"/>
        <end position="76"/>
    </location>
</feature>
<feature type="repeat" description="TPR 3">
    <location>
        <begin position="141"/>
        <end position="174"/>
    </location>
</feature>
<feature type="repeat" description="TPR 4">
    <location>
        <begin position="175"/>
        <end position="208"/>
    </location>
</feature>
<feature type="repeat" description="TPR 5">
    <location>
        <begin position="238"/>
        <end position="271"/>
    </location>
</feature>
<feature type="repeat" description="TPR 6">
    <location>
        <begin position="384"/>
        <end position="417"/>
    </location>
</feature>
<feature type="repeat" description="TPR 7">
    <location>
        <begin position="418"/>
        <end position="449"/>
    </location>
</feature>
<feature type="repeat" description="TPR 8">
    <location>
        <begin position="451"/>
        <end position="484"/>
    </location>
</feature>
<feature type="repeat" description="TPR 9">
    <location>
        <begin position="537"/>
        <end position="570"/>
    </location>
</feature>
<protein>
    <recommendedName>
        <fullName>Tetratricopeptide repeat protein 30 homolog</fullName>
        <shortName>TPR repeat protein 30 homolog</shortName>
    </recommendedName>
    <alternativeName>
        <fullName>Abnormal dye filling protein 1</fullName>
    </alternativeName>
</protein>
<keyword id="KW-0966">Cell projection</keyword>
<keyword id="KW-0969">Cilium</keyword>
<keyword id="KW-0970">Cilium biogenesis/degradation</keyword>
<keyword id="KW-0175">Coiled coil</keyword>
<keyword id="KW-1185">Reference proteome</keyword>
<keyword id="KW-0677">Repeat</keyword>
<keyword id="KW-0802">TPR repeat</keyword>
<proteinExistence type="inferred from homology"/>
<dbReference type="EMBL" id="HE600915">
    <property type="protein sequence ID" value="CAP30085.1"/>
    <property type="status" value="ALT_SEQ"/>
    <property type="molecule type" value="Genomic_DNA"/>
</dbReference>
<dbReference type="SMR" id="A8XBR9"/>
<dbReference type="FunCoup" id="A8XBR9">
    <property type="interactions" value="470"/>
</dbReference>
<dbReference type="STRING" id="6238.A8XBR9"/>
<dbReference type="EnsemblMetazoa" id="CBG10774a.1">
    <property type="protein sequence ID" value="CBG10774a.1"/>
    <property type="gene ID" value="WBGene00032053"/>
</dbReference>
<dbReference type="KEGG" id="cbr:CBG_10774"/>
<dbReference type="CTD" id="8581948"/>
<dbReference type="WormBase" id="CBG10774a">
    <property type="protein sequence ID" value="CBP48406"/>
    <property type="gene ID" value="WBGene00032053"/>
    <property type="gene designation" value="Cbr-dyf-1"/>
</dbReference>
<dbReference type="eggNOG" id="KOG4340">
    <property type="taxonomic scope" value="Eukaryota"/>
</dbReference>
<dbReference type="HOGENOM" id="CLU_057443_0_0_1"/>
<dbReference type="InParanoid" id="A8XBR9"/>
<dbReference type="OrthoDB" id="10249577at2759"/>
<dbReference type="Proteomes" id="UP000008549">
    <property type="component" value="Unassembled WGS sequence"/>
</dbReference>
<dbReference type="GO" id="GO:0005879">
    <property type="term" value="C:axonemal microtubule"/>
    <property type="evidence" value="ECO:0000250"/>
    <property type="project" value="UniProtKB"/>
</dbReference>
<dbReference type="GO" id="GO:0005929">
    <property type="term" value="C:cilium"/>
    <property type="evidence" value="ECO:0000250"/>
    <property type="project" value="UniProtKB"/>
</dbReference>
<dbReference type="GO" id="GO:0030992">
    <property type="term" value="C:intraciliary transport particle B"/>
    <property type="evidence" value="ECO:0000318"/>
    <property type="project" value="GO_Central"/>
</dbReference>
<dbReference type="GO" id="GO:0120170">
    <property type="term" value="F:intraciliary transport particle B binding"/>
    <property type="evidence" value="ECO:0000318"/>
    <property type="project" value="GO_Central"/>
</dbReference>
<dbReference type="GO" id="GO:0042073">
    <property type="term" value="P:intraciliary transport"/>
    <property type="evidence" value="ECO:0000250"/>
    <property type="project" value="UniProtKB"/>
</dbReference>
<dbReference type="GO" id="GO:0018095">
    <property type="term" value="P:protein polyglutamylation"/>
    <property type="evidence" value="ECO:0000250"/>
    <property type="project" value="UniProtKB"/>
</dbReference>
<dbReference type="FunFam" id="1.25.40.10:FF:000186">
    <property type="entry name" value="Tetratricopeptide repeat domain 30A"/>
    <property type="match status" value="1"/>
</dbReference>
<dbReference type="FunFam" id="1.25.40.10:FF:001267">
    <property type="entry name" value="Tetratricopeptide repeat protein 30 homolog"/>
    <property type="match status" value="1"/>
</dbReference>
<dbReference type="Gene3D" id="1.25.40.10">
    <property type="entry name" value="Tetratricopeptide repeat domain"/>
    <property type="match status" value="3"/>
</dbReference>
<dbReference type="InterPro" id="IPR011990">
    <property type="entry name" value="TPR-like_helical_dom_sf"/>
</dbReference>
<dbReference type="InterPro" id="IPR019734">
    <property type="entry name" value="TPR_rpt"/>
</dbReference>
<dbReference type="InterPro" id="IPR039941">
    <property type="entry name" value="TT30"/>
</dbReference>
<dbReference type="PANTHER" id="PTHR20931">
    <property type="entry name" value="TETRATRICOPEPTIDE REPEAT PROTEIN 30"/>
    <property type="match status" value="1"/>
</dbReference>
<dbReference type="PANTHER" id="PTHR20931:SF0">
    <property type="entry name" value="TETRATRICOPEPTIDE REPEAT PROTEIN 30"/>
    <property type="match status" value="1"/>
</dbReference>
<dbReference type="Pfam" id="PF14559">
    <property type="entry name" value="TPR_19"/>
    <property type="match status" value="1"/>
</dbReference>
<dbReference type="SMART" id="SM00028">
    <property type="entry name" value="TPR"/>
    <property type="match status" value="4"/>
</dbReference>
<dbReference type="SUPFAM" id="SSF48452">
    <property type="entry name" value="TPR-like"/>
    <property type="match status" value="1"/>
</dbReference>
<dbReference type="PROSITE" id="PS50293">
    <property type="entry name" value="TPR_REGION"/>
    <property type="match status" value="2"/>
</dbReference>
<organism>
    <name type="scientific">Caenorhabditis briggsae</name>
    <dbReference type="NCBI Taxonomy" id="6238"/>
    <lineage>
        <taxon>Eukaryota</taxon>
        <taxon>Metazoa</taxon>
        <taxon>Ecdysozoa</taxon>
        <taxon>Nematoda</taxon>
        <taxon>Chromadorea</taxon>
        <taxon>Rhabditida</taxon>
        <taxon>Rhabditina</taxon>
        <taxon>Rhabditomorpha</taxon>
        <taxon>Rhabditoidea</taxon>
        <taxon>Rhabditidae</taxon>
        <taxon>Peloderinae</taxon>
        <taxon>Caenorhabditis</taxon>
    </lineage>
</organism>
<reference key="1">
    <citation type="journal article" date="2003" name="PLoS Biol.">
        <title>The genome sequence of Caenorhabditis briggsae: a platform for comparative genomics.</title>
        <authorList>
            <person name="Stein L.D."/>
            <person name="Bao Z."/>
            <person name="Blasiar D."/>
            <person name="Blumenthal T."/>
            <person name="Brent M.R."/>
            <person name="Chen N."/>
            <person name="Chinwalla A."/>
            <person name="Clarke L."/>
            <person name="Clee C."/>
            <person name="Coghlan A."/>
            <person name="Coulson A."/>
            <person name="D'Eustachio P."/>
            <person name="Fitch D.H.A."/>
            <person name="Fulton L.A."/>
            <person name="Fulton R.E."/>
            <person name="Griffiths-Jones S."/>
            <person name="Harris T.W."/>
            <person name="Hillier L.W."/>
            <person name="Kamath R."/>
            <person name="Kuwabara P.E."/>
            <person name="Mardis E.R."/>
            <person name="Marra M.A."/>
            <person name="Miner T.L."/>
            <person name="Minx P."/>
            <person name="Mullikin J.C."/>
            <person name="Plumb R.W."/>
            <person name="Rogers J."/>
            <person name="Schein J.E."/>
            <person name="Sohrmann M."/>
            <person name="Spieth J."/>
            <person name="Stajich J.E."/>
            <person name="Wei C."/>
            <person name="Willey D."/>
            <person name="Wilson R.K."/>
            <person name="Durbin R.M."/>
            <person name="Waterston R.H."/>
        </authorList>
    </citation>
    <scope>NUCLEOTIDE SEQUENCE [LARGE SCALE GENOMIC DNA]</scope>
    <source>
        <strain>AF16</strain>
    </source>
</reference>